<gene>
    <name type="primary">Acad11</name>
</gene>
<sequence>MEMDVTRDTVEVLPQHKFDIRSLEAYLNQHLPGFGSDHRAVLTVTQYRSGQSNPTFFLQKGSQAYVLRKKPPGSLLPKAHKIDREFKVQKALFSVGFPVPKPLLYCSNASIIGTEFYVMEHVQGRIFRDFSIPGVSPAERAAIYVSLVETLAWLHSLDIHSLGLDRYGTGVGYCKRQVSTWTKQYQASAHQSIPAMDQLSTWLMRNLPDSDNEECLVHGDFKLDNIVFHPKECRVIAVLDWELSTFGHPLSDLAHLSLFYFWPRTLPMINRGSHIQENTGIPLMEELISIYCRRRGIDPNLPNWNFFMALSFFKLAGIAQGVYSRYLMGNNSSEDSFLTANTVQPLAETGLQLSRRTLSTVPPQADAKSRLFAQSRRGQEVLTRVKQFMKQHVFPAEKEVAEYYAQNGNSAEKWEHPLVIEKLKEMAKAEGLWNLFLPAVSGLSQVDYALIAEETGKCFFAPDVFNCQAPDTGNMEVLHLYGSEQQKQQWLEPLLRGDITSVFCMTEPNVSSSDATNMECSIQRDGGSYIVHGKKWWSSGAGNPKCKIAVVLGRTESPSVSRHKVHSMILVPMDTPGVELIRPLSVFGYMDNVHGGHWEVHFNHVRVPASNLILGEGRGFEISQGRLGPGRIHHCMRSVGLAERILQIMCDRAVQREAFGKKLYEHEVVAHWIAKSRIAIEEIRLLTLKAAHSIDTLGSAAARKEIAMIKVAAPKAVCKIADRAIQVHGGAGVSQDYPLANMYAIIRTLRLADGPDEVHLSAIAKMELQDQARQLKARM</sequence>
<name>ACD11_RAT</name>
<reference key="1">
    <citation type="submission" date="2005-09" db="EMBL/GenBank/DDBJ databases">
        <authorList>
            <person name="Mural R.J."/>
            <person name="Adams M.D."/>
            <person name="Myers E.W."/>
            <person name="Smith H.O."/>
            <person name="Venter J.C."/>
        </authorList>
    </citation>
    <scope>NUCLEOTIDE SEQUENCE [LARGE SCALE GENOMIC DNA]</scope>
    <source>
        <strain>Brown Norway</strain>
    </source>
</reference>
<reference key="2">
    <citation type="journal article" date="2004" name="Genome Res.">
        <title>The status, quality, and expansion of the NIH full-length cDNA project: the Mammalian Gene Collection (MGC).</title>
        <authorList>
            <consortium name="The MGC Project Team"/>
        </authorList>
    </citation>
    <scope>NUCLEOTIDE SEQUENCE [LARGE SCALE MRNA]</scope>
    <source>
        <tissue>Placenta</tissue>
    </source>
</reference>
<reference key="3">
    <citation type="journal article" date="2004" name="J. Biol. Chem.">
        <title>Proteomic analysis of rat liver peroxisome: presence of peroxisome-specific isozyme of Lon protease.</title>
        <authorList>
            <person name="Kikuchi M."/>
            <person name="Hatano N."/>
            <person name="Yokota S."/>
            <person name="Shimozawa N."/>
            <person name="Imanaka T."/>
            <person name="Taniguchi H."/>
        </authorList>
    </citation>
    <scope>SUBCELLULAR LOCATION</scope>
    <scope>IDENTIFICATION BY MASS SPECTROMETRY</scope>
</reference>
<evidence type="ECO:0000250" key="1"/>
<evidence type="ECO:0000250" key="2">
    <source>
        <dbReference type="UniProtKB" id="Q709F0"/>
    </source>
</evidence>
<evidence type="ECO:0000250" key="3">
    <source>
        <dbReference type="UniProtKB" id="Q80XL6"/>
    </source>
</evidence>
<evidence type="ECO:0000269" key="4">
    <source>
    </source>
</evidence>
<evidence type="ECO:0000305" key="5"/>
<organism>
    <name type="scientific">Rattus norvegicus</name>
    <name type="common">Rat</name>
    <dbReference type="NCBI Taxonomy" id="10116"/>
    <lineage>
        <taxon>Eukaryota</taxon>
        <taxon>Metazoa</taxon>
        <taxon>Chordata</taxon>
        <taxon>Craniata</taxon>
        <taxon>Vertebrata</taxon>
        <taxon>Euteleostomi</taxon>
        <taxon>Mammalia</taxon>
        <taxon>Eutheria</taxon>
        <taxon>Euarchontoglires</taxon>
        <taxon>Glires</taxon>
        <taxon>Rodentia</taxon>
        <taxon>Myomorpha</taxon>
        <taxon>Muroidea</taxon>
        <taxon>Muridae</taxon>
        <taxon>Murinae</taxon>
        <taxon>Rattus</taxon>
    </lineage>
</organism>
<keyword id="KW-0007">Acetylation</keyword>
<keyword id="KW-0274">FAD</keyword>
<keyword id="KW-0276">Fatty acid metabolism</keyword>
<keyword id="KW-0285">Flavoprotein</keyword>
<keyword id="KW-0443">Lipid metabolism</keyword>
<keyword id="KW-0472">Membrane</keyword>
<keyword id="KW-0496">Mitochondrion</keyword>
<keyword id="KW-0560">Oxidoreductase</keyword>
<keyword id="KW-0576">Peroxisome</keyword>
<keyword id="KW-0597">Phosphoprotein</keyword>
<keyword id="KW-1185">Reference proteome</keyword>
<feature type="chain" id="PRO_0000385188" description="Acyl-CoA dehydrogenase family member 11">
    <location>
        <begin position="1"/>
        <end position="779"/>
    </location>
</feature>
<feature type="binding site" description="in other chain" evidence="1">
    <location>
        <begin position="503"/>
        <end position="513"/>
    </location>
    <ligand>
        <name>FAD</name>
        <dbReference type="ChEBI" id="CHEBI:57692"/>
        <note>ligand shared between dimeric partners</note>
    </ligand>
</feature>
<feature type="binding site" description="in other chain" evidence="1">
    <location>
        <begin position="511"/>
        <end position="513"/>
    </location>
    <ligand>
        <name>FAD</name>
        <dbReference type="ChEBI" id="CHEBI:57692"/>
        <note>ligand shared between dimeric partners</note>
    </ligand>
</feature>
<feature type="binding site" evidence="1">
    <location>
        <position position="513"/>
    </location>
    <ligand>
        <name>substrate</name>
    </ligand>
</feature>
<feature type="binding site" description="in other chain" evidence="1">
    <location>
        <begin position="537"/>
        <end position="539"/>
    </location>
    <ligand>
        <name>FAD</name>
        <dbReference type="ChEBI" id="CHEBI:57692"/>
        <note>ligand shared between dimeric partners</note>
    </ligand>
</feature>
<feature type="binding site" description="in other chain" evidence="1">
    <location>
        <position position="539"/>
    </location>
    <ligand>
        <name>FAD</name>
        <dbReference type="ChEBI" id="CHEBI:57692"/>
        <note>ligand shared between dimeric partners</note>
    </ligand>
</feature>
<feature type="binding site" evidence="1">
    <location>
        <begin position="628"/>
        <end position="631"/>
    </location>
    <ligand>
        <name>substrate</name>
    </ligand>
</feature>
<feature type="binding site" evidence="1">
    <location>
        <position position="656"/>
    </location>
    <ligand>
        <name>FAD</name>
        <dbReference type="ChEBI" id="CHEBI:57692"/>
        <note>ligand shared between dimeric partners</note>
    </ligand>
</feature>
<feature type="binding site" evidence="1">
    <location>
        <begin position="726"/>
        <end position="730"/>
    </location>
    <ligand>
        <name>FAD</name>
        <dbReference type="ChEBI" id="CHEBI:57692"/>
        <note>ligand shared between dimeric partners</note>
    </ligand>
</feature>
<feature type="binding site" description="in other chain" evidence="1">
    <location>
        <position position="726"/>
    </location>
    <ligand>
        <name>FAD</name>
        <dbReference type="ChEBI" id="CHEBI:57692"/>
        <note>ligand shared between dimeric partners</note>
    </ligand>
</feature>
<feature type="binding site" evidence="1">
    <location>
        <position position="754"/>
    </location>
    <ligand>
        <name>substrate</name>
    </ligand>
</feature>
<feature type="binding site" description="in other chain" evidence="1">
    <location>
        <begin position="755"/>
        <end position="757"/>
    </location>
    <ligand>
        <name>FAD</name>
        <dbReference type="ChEBI" id="CHEBI:57692"/>
        <note>ligand shared between dimeric partners</note>
    </ligand>
</feature>
<feature type="binding site" description="in other chain" evidence="1">
    <location>
        <position position="757"/>
    </location>
    <ligand>
        <name>FAD</name>
        <dbReference type="ChEBI" id="CHEBI:57692"/>
        <note>ligand shared between dimeric partners</note>
    </ligand>
</feature>
<feature type="modified residue" description="N6-acetyllysine" evidence="3">
    <location>
        <position position="175"/>
    </location>
</feature>
<feature type="modified residue" description="Phosphoserine" evidence="3">
    <location>
        <position position="210"/>
    </location>
</feature>
<feature type="modified residue" description="Phosphotyrosine" evidence="3">
    <location>
        <position position="323"/>
    </location>
</feature>
<feature type="modified residue" description="N6-succinyllysine" evidence="3">
    <location>
        <position position="368"/>
    </location>
</feature>
<feature type="modified residue" description="N6-succinyllysine" evidence="3">
    <location>
        <position position="390"/>
    </location>
</feature>
<feature type="modified residue" description="N6-acetyllysine" evidence="3">
    <location>
        <position position="765"/>
    </location>
</feature>
<comment type="function">
    <text evidence="2">Acyl-CoA dehydrogenase, that exhibits maximal activity towards saturated C22-CoA. Probably participates in beta-oxydation and energy production but could also play a role in the metabolism of specific fatty acids to control fatty acids composition of cellular lipids in brain.</text>
</comment>
<comment type="catalytic activity">
    <reaction evidence="2">
        <text>a 2,3-saturated acyl-CoA + oxidized [electron-transfer flavoprotein] + H(+) = a (2E)-enoyl-CoA + reduced [electron-transfer flavoprotein]</text>
        <dbReference type="Rhea" id="RHEA:44704"/>
        <dbReference type="Rhea" id="RHEA-COMP:10685"/>
        <dbReference type="Rhea" id="RHEA-COMP:10686"/>
        <dbReference type="ChEBI" id="CHEBI:15378"/>
        <dbReference type="ChEBI" id="CHEBI:57692"/>
        <dbReference type="ChEBI" id="CHEBI:58307"/>
        <dbReference type="ChEBI" id="CHEBI:58856"/>
        <dbReference type="ChEBI" id="CHEBI:65111"/>
    </reaction>
    <physiologicalReaction direction="left-to-right" evidence="2">
        <dbReference type="Rhea" id="RHEA:44705"/>
    </physiologicalReaction>
</comment>
<comment type="catalytic activity">
    <reaction evidence="2">
        <text>docosanoyl-CoA + oxidized [electron-transfer flavoprotein] + H(+) = (2E)-docosenoyl-CoA + reduced [electron-transfer flavoprotein]</text>
        <dbReference type="Rhea" id="RHEA:47228"/>
        <dbReference type="Rhea" id="RHEA-COMP:10685"/>
        <dbReference type="Rhea" id="RHEA-COMP:10686"/>
        <dbReference type="ChEBI" id="CHEBI:15378"/>
        <dbReference type="ChEBI" id="CHEBI:57692"/>
        <dbReference type="ChEBI" id="CHEBI:58307"/>
        <dbReference type="ChEBI" id="CHEBI:65059"/>
        <dbReference type="ChEBI" id="CHEBI:74692"/>
    </reaction>
    <physiologicalReaction direction="left-to-right" evidence="2">
        <dbReference type="Rhea" id="RHEA:47229"/>
    </physiologicalReaction>
</comment>
<comment type="catalytic activity">
    <reaction evidence="2">
        <text>tetracosanoyl-CoA + oxidized [electron-transfer flavoprotein] + H(+) = (2E)-tetracosenoyl-CoA + reduced [electron-transfer flavoprotein]</text>
        <dbReference type="Rhea" id="RHEA:47232"/>
        <dbReference type="Rhea" id="RHEA-COMP:10685"/>
        <dbReference type="Rhea" id="RHEA-COMP:10686"/>
        <dbReference type="ChEBI" id="CHEBI:15378"/>
        <dbReference type="ChEBI" id="CHEBI:57692"/>
        <dbReference type="ChEBI" id="CHEBI:58307"/>
        <dbReference type="ChEBI" id="CHEBI:65052"/>
        <dbReference type="ChEBI" id="CHEBI:74693"/>
    </reaction>
    <physiologicalReaction direction="left-to-right" evidence="2">
        <dbReference type="Rhea" id="RHEA:47233"/>
    </physiologicalReaction>
</comment>
<comment type="catalytic activity">
    <reaction evidence="2">
        <text>eicosanoyl-CoA + oxidized [electron-transfer flavoprotein] + H(+) = (2E)-eicosenoyl-CoA + reduced [electron-transfer flavoprotein]</text>
        <dbReference type="Rhea" id="RHEA:47236"/>
        <dbReference type="Rhea" id="RHEA-COMP:10685"/>
        <dbReference type="Rhea" id="RHEA-COMP:10686"/>
        <dbReference type="ChEBI" id="CHEBI:15378"/>
        <dbReference type="ChEBI" id="CHEBI:57380"/>
        <dbReference type="ChEBI" id="CHEBI:57692"/>
        <dbReference type="ChEBI" id="CHEBI:58307"/>
        <dbReference type="ChEBI" id="CHEBI:74691"/>
    </reaction>
    <physiologicalReaction direction="left-to-right" evidence="2">
        <dbReference type="Rhea" id="RHEA:47237"/>
    </physiologicalReaction>
</comment>
<comment type="catalytic activity">
    <reaction evidence="2">
        <text>hexacosanoyl-CoA + oxidized [electron-transfer flavoprotein] + H(+) = (2E)-hexacosenoyl-CoA + reduced [electron-transfer flavoprotein]</text>
        <dbReference type="Rhea" id="RHEA:48216"/>
        <dbReference type="Rhea" id="RHEA-COMP:10685"/>
        <dbReference type="Rhea" id="RHEA-COMP:10686"/>
        <dbReference type="ChEBI" id="CHEBI:15378"/>
        <dbReference type="ChEBI" id="CHEBI:57692"/>
        <dbReference type="ChEBI" id="CHEBI:58307"/>
        <dbReference type="ChEBI" id="CHEBI:64868"/>
        <dbReference type="ChEBI" id="CHEBI:74281"/>
    </reaction>
    <physiologicalReaction direction="left-to-right" evidence="2">
        <dbReference type="Rhea" id="RHEA:48217"/>
    </physiologicalReaction>
</comment>
<comment type="catalytic activity">
    <reaction evidence="2">
        <text>tricosanoyl-CoA + oxidized [electron-transfer flavoprotein] + H(+) = (2E)-tricosenoyl-CoA + reduced [electron-transfer flavoprotein]</text>
        <dbReference type="Rhea" id="RHEA:48220"/>
        <dbReference type="Rhea" id="RHEA-COMP:10685"/>
        <dbReference type="Rhea" id="RHEA-COMP:10686"/>
        <dbReference type="ChEBI" id="CHEBI:15378"/>
        <dbReference type="ChEBI" id="CHEBI:57692"/>
        <dbReference type="ChEBI" id="CHEBI:58307"/>
        <dbReference type="ChEBI" id="CHEBI:90118"/>
        <dbReference type="ChEBI" id="CHEBI:90119"/>
    </reaction>
    <physiologicalReaction direction="left-to-right" evidence="2">
        <dbReference type="Rhea" id="RHEA:48221"/>
    </physiologicalReaction>
</comment>
<comment type="cofactor">
    <cofactor evidence="2">
        <name>FAD</name>
        <dbReference type="ChEBI" id="CHEBI:57692"/>
    </cofactor>
</comment>
<comment type="pathway">
    <text evidence="2">Lipid metabolism; fatty acid beta-oxidation.</text>
</comment>
<comment type="subunit">
    <text evidence="2">Homodimer.</text>
</comment>
<comment type="subcellular location">
    <subcellularLocation>
        <location evidence="4">Peroxisome</location>
    </subcellularLocation>
    <subcellularLocation>
        <location evidence="2">Mitochondrion membrane</location>
    </subcellularLocation>
</comment>
<comment type="similarity">
    <text evidence="5">Belongs to the acyl-CoA dehydrogenase family.</text>
</comment>
<proteinExistence type="evidence at protein level"/>
<dbReference type="EC" id="1.3.8.-" evidence="2"/>
<dbReference type="EMBL" id="CH473954">
    <property type="protein sequence ID" value="EDL77362.1"/>
    <property type="molecule type" value="Genomic_DNA"/>
</dbReference>
<dbReference type="EMBL" id="BC167762">
    <property type="protein sequence ID" value="AAI67762.1"/>
    <property type="molecule type" value="mRNA"/>
</dbReference>
<dbReference type="RefSeq" id="NP_001101651.1">
    <property type="nucleotide sequence ID" value="NM_001108181.1"/>
</dbReference>
<dbReference type="SMR" id="B3DMA2"/>
<dbReference type="FunCoup" id="B3DMA2">
    <property type="interactions" value="113"/>
</dbReference>
<dbReference type="STRING" id="10116.ENSRNOP00000036574"/>
<dbReference type="iPTMnet" id="B3DMA2"/>
<dbReference type="PhosphoSitePlus" id="B3DMA2"/>
<dbReference type="jPOST" id="B3DMA2"/>
<dbReference type="PaxDb" id="10116-ENSRNOP00000036574"/>
<dbReference type="PeptideAtlas" id="B3DMA2"/>
<dbReference type="Ensembl" id="ENSRNOT00000038383.6">
    <property type="protein sequence ID" value="ENSRNOP00000036574.4"/>
    <property type="gene ID" value="ENSRNOG00000010940.8"/>
</dbReference>
<dbReference type="GeneID" id="315973"/>
<dbReference type="KEGG" id="rno:315973"/>
<dbReference type="UCSC" id="RGD:1306270">
    <property type="organism name" value="rat"/>
</dbReference>
<dbReference type="AGR" id="RGD:1306270"/>
<dbReference type="CTD" id="84129"/>
<dbReference type="RGD" id="1306270">
    <property type="gene designation" value="Acad11"/>
</dbReference>
<dbReference type="eggNOG" id="KOG1469">
    <property type="taxonomic scope" value="Eukaryota"/>
</dbReference>
<dbReference type="GeneTree" id="ENSGT00940000160993"/>
<dbReference type="HOGENOM" id="CLU_007526_3_0_1"/>
<dbReference type="InParanoid" id="B3DMA2"/>
<dbReference type="OMA" id="LHGGHFE"/>
<dbReference type="OrthoDB" id="434771at2759"/>
<dbReference type="PhylomeDB" id="B3DMA2"/>
<dbReference type="Reactome" id="R-RNO-77289">
    <property type="pathway name" value="Mitochondrial Fatty Acid Beta-Oxidation"/>
</dbReference>
<dbReference type="UniPathway" id="UPA00659"/>
<dbReference type="PRO" id="PR:B3DMA2"/>
<dbReference type="Proteomes" id="UP000002494">
    <property type="component" value="Chromosome 8"/>
</dbReference>
<dbReference type="Proteomes" id="UP000234681">
    <property type="component" value="Chromosome 8"/>
</dbReference>
<dbReference type="Bgee" id="ENSRNOG00000010940">
    <property type="expression patterns" value="Expressed in liver and 18 other cell types or tissues"/>
</dbReference>
<dbReference type="GO" id="GO:0005737">
    <property type="term" value="C:cytoplasm"/>
    <property type="evidence" value="ECO:0000318"/>
    <property type="project" value="GO_Central"/>
</dbReference>
<dbReference type="GO" id="GO:0031966">
    <property type="term" value="C:mitochondrial membrane"/>
    <property type="evidence" value="ECO:0000266"/>
    <property type="project" value="RGD"/>
</dbReference>
<dbReference type="GO" id="GO:0005739">
    <property type="term" value="C:mitochondrion"/>
    <property type="evidence" value="ECO:0000318"/>
    <property type="project" value="GO_Central"/>
</dbReference>
<dbReference type="GO" id="GO:0005634">
    <property type="term" value="C:nucleus"/>
    <property type="evidence" value="ECO:0000266"/>
    <property type="project" value="RGD"/>
</dbReference>
<dbReference type="GO" id="GO:0005777">
    <property type="term" value="C:peroxisome"/>
    <property type="evidence" value="ECO:0000314"/>
    <property type="project" value="HGNC-UCL"/>
</dbReference>
<dbReference type="GO" id="GO:0003995">
    <property type="term" value="F:acyl-CoA dehydrogenase activity"/>
    <property type="evidence" value="ECO:0000318"/>
    <property type="project" value="GO_Central"/>
</dbReference>
<dbReference type="GO" id="GO:0050660">
    <property type="term" value="F:flavin adenine dinucleotide binding"/>
    <property type="evidence" value="ECO:0007669"/>
    <property type="project" value="InterPro"/>
</dbReference>
<dbReference type="GO" id="GO:0004466">
    <property type="term" value="F:long-chain fatty acyl-CoA dehydrogenase activity"/>
    <property type="evidence" value="ECO:0000266"/>
    <property type="project" value="RGD"/>
</dbReference>
<dbReference type="GO" id="GO:0070991">
    <property type="term" value="F:medium-chain fatty acyl-CoA dehydrogenase activity"/>
    <property type="evidence" value="ECO:0000266"/>
    <property type="project" value="RGD"/>
</dbReference>
<dbReference type="GO" id="GO:0017099">
    <property type="term" value="F:very-long-chain fatty acyl-CoA dehydrogenase activity"/>
    <property type="evidence" value="ECO:0000266"/>
    <property type="project" value="RGD"/>
</dbReference>
<dbReference type="GO" id="GO:0033539">
    <property type="term" value="P:fatty acid beta-oxidation using acyl-CoA dehydrogenase"/>
    <property type="evidence" value="ECO:0000266"/>
    <property type="project" value="RGD"/>
</dbReference>
<dbReference type="CDD" id="cd05154">
    <property type="entry name" value="ACAD10_11_N-like"/>
    <property type="match status" value="1"/>
</dbReference>
<dbReference type="CDD" id="cd01155">
    <property type="entry name" value="ACAD_FadE2"/>
    <property type="match status" value="1"/>
</dbReference>
<dbReference type="FunFam" id="2.40.110.10:FF:000002">
    <property type="entry name" value="Acyl-CoA dehydrogenase fadE12"/>
    <property type="match status" value="1"/>
</dbReference>
<dbReference type="FunFam" id="1.20.140.10:FF:000018">
    <property type="entry name" value="Acyl-CoA dehydrogenase family member 10"/>
    <property type="match status" value="1"/>
</dbReference>
<dbReference type="FunFam" id="3.30.200.20:FF:000343">
    <property type="entry name" value="Acyl-CoA dehydrogenase family member 10"/>
    <property type="match status" value="1"/>
</dbReference>
<dbReference type="FunFam" id="3.90.1200.10:FF:000009">
    <property type="entry name" value="Acyl-CoA dehydrogenase family member 11"/>
    <property type="match status" value="1"/>
</dbReference>
<dbReference type="FunFam" id="1.10.540.10:FF:000016">
    <property type="entry name" value="acyl-CoA dehydrogenase family member 11"/>
    <property type="match status" value="1"/>
</dbReference>
<dbReference type="Gene3D" id="3.90.1200.10">
    <property type="match status" value="1"/>
</dbReference>
<dbReference type="Gene3D" id="1.10.540.10">
    <property type="entry name" value="Acyl-CoA dehydrogenase/oxidase, N-terminal domain"/>
    <property type="match status" value="1"/>
</dbReference>
<dbReference type="Gene3D" id="2.40.110.10">
    <property type="entry name" value="Butyryl-CoA Dehydrogenase, subunit A, domain 2"/>
    <property type="match status" value="1"/>
</dbReference>
<dbReference type="Gene3D" id="1.20.140.10">
    <property type="entry name" value="Butyryl-CoA Dehydrogenase, subunit A, domain 3"/>
    <property type="match status" value="1"/>
</dbReference>
<dbReference type="Gene3D" id="3.30.200.20">
    <property type="entry name" value="Phosphorylase Kinase, domain 1"/>
    <property type="match status" value="1"/>
</dbReference>
<dbReference type="InterPro" id="IPR041726">
    <property type="entry name" value="ACAD10_11_N"/>
</dbReference>
<dbReference type="InterPro" id="IPR050741">
    <property type="entry name" value="Acyl-CoA_dehydrogenase"/>
</dbReference>
<dbReference type="InterPro" id="IPR006091">
    <property type="entry name" value="Acyl-CoA_Oxase/DH_mid-dom"/>
</dbReference>
<dbReference type="InterPro" id="IPR046373">
    <property type="entry name" value="Acyl-CoA_Oxase/DH_mid-dom_sf"/>
</dbReference>
<dbReference type="InterPro" id="IPR036250">
    <property type="entry name" value="AcylCo_DH-like_C"/>
</dbReference>
<dbReference type="InterPro" id="IPR009075">
    <property type="entry name" value="AcylCo_DH/oxidase_C"/>
</dbReference>
<dbReference type="InterPro" id="IPR013786">
    <property type="entry name" value="AcylCoA_DH/ox_N"/>
</dbReference>
<dbReference type="InterPro" id="IPR037069">
    <property type="entry name" value="AcylCoA_DH/ox_N_sf"/>
</dbReference>
<dbReference type="InterPro" id="IPR009100">
    <property type="entry name" value="AcylCoA_DH/oxidase_NM_dom_sf"/>
</dbReference>
<dbReference type="InterPro" id="IPR002575">
    <property type="entry name" value="Aminoglycoside_PTrfase"/>
</dbReference>
<dbReference type="InterPro" id="IPR011009">
    <property type="entry name" value="Kinase-like_dom_sf"/>
</dbReference>
<dbReference type="PANTHER" id="PTHR48083:SF13">
    <property type="entry name" value="ACYL-COA DEHYDROGENASE FAMILY MEMBER 11"/>
    <property type="match status" value="1"/>
</dbReference>
<dbReference type="PANTHER" id="PTHR48083">
    <property type="entry name" value="MEDIUM-CHAIN SPECIFIC ACYL-COA DEHYDROGENASE, MITOCHONDRIAL-RELATED"/>
    <property type="match status" value="1"/>
</dbReference>
<dbReference type="Pfam" id="PF00441">
    <property type="entry name" value="Acyl-CoA_dh_1"/>
    <property type="match status" value="1"/>
</dbReference>
<dbReference type="Pfam" id="PF02770">
    <property type="entry name" value="Acyl-CoA_dh_M"/>
    <property type="match status" value="1"/>
</dbReference>
<dbReference type="Pfam" id="PF02771">
    <property type="entry name" value="Acyl-CoA_dh_N"/>
    <property type="match status" value="1"/>
</dbReference>
<dbReference type="Pfam" id="PF01636">
    <property type="entry name" value="APH"/>
    <property type="match status" value="1"/>
</dbReference>
<dbReference type="SUPFAM" id="SSF47203">
    <property type="entry name" value="Acyl-CoA dehydrogenase C-terminal domain-like"/>
    <property type="match status" value="1"/>
</dbReference>
<dbReference type="SUPFAM" id="SSF56645">
    <property type="entry name" value="Acyl-CoA dehydrogenase NM domain-like"/>
    <property type="match status" value="1"/>
</dbReference>
<dbReference type="SUPFAM" id="SSF56112">
    <property type="entry name" value="Protein kinase-like (PK-like)"/>
    <property type="match status" value="1"/>
</dbReference>
<accession>B3DMA2</accession>
<protein>
    <recommendedName>
        <fullName>Acyl-CoA dehydrogenase family member 11</fullName>
        <shortName>ACAD-11</shortName>
        <ecNumber evidence="2">1.3.8.-</ecNumber>
    </recommendedName>
</protein>